<dbReference type="EC" id="3.1.21.7" evidence="1"/>
<dbReference type="EMBL" id="CP000468">
    <property type="protein sequence ID" value="ABJ03459.1"/>
    <property type="molecule type" value="Genomic_DNA"/>
</dbReference>
<dbReference type="RefSeq" id="WP_000362388.1">
    <property type="nucleotide sequence ID" value="NZ_CADILS010000053.1"/>
</dbReference>
<dbReference type="SMR" id="A1AIG9"/>
<dbReference type="GeneID" id="75169444"/>
<dbReference type="KEGG" id="ecv:APECO1_2477"/>
<dbReference type="HOGENOM" id="CLU_047631_1_0_6"/>
<dbReference type="Proteomes" id="UP000008216">
    <property type="component" value="Chromosome"/>
</dbReference>
<dbReference type="GO" id="GO:0005737">
    <property type="term" value="C:cytoplasm"/>
    <property type="evidence" value="ECO:0007669"/>
    <property type="project" value="UniProtKB-SubCell"/>
</dbReference>
<dbReference type="GO" id="GO:0043737">
    <property type="term" value="F:deoxyribonuclease V activity"/>
    <property type="evidence" value="ECO:0007669"/>
    <property type="project" value="UniProtKB-UniRule"/>
</dbReference>
<dbReference type="GO" id="GO:0000287">
    <property type="term" value="F:magnesium ion binding"/>
    <property type="evidence" value="ECO:0007669"/>
    <property type="project" value="UniProtKB-UniRule"/>
</dbReference>
<dbReference type="GO" id="GO:0016891">
    <property type="term" value="F:RNA endonuclease activity, producing 5'-phosphomonoesters"/>
    <property type="evidence" value="ECO:0007669"/>
    <property type="project" value="TreeGrafter"/>
</dbReference>
<dbReference type="GO" id="GO:0003727">
    <property type="term" value="F:single-stranded RNA binding"/>
    <property type="evidence" value="ECO:0007669"/>
    <property type="project" value="TreeGrafter"/>
</dbReference>
<dbReference type="GO" id="GO:0006281">
    <property type="term" value="P:DNA repair"/>
    <property type="evidence" value="ECO:0007669"/>
    <property type="project" value="UniProtKB-UniRule"/>
</dbReference>
<dbReference type="CDD" id="cd06559">
    <property type="entry name" value="Endonuclease_V"/>
    <property type="match status" value="1"/>
</dbReference>
<dbReference type="FunFam" id="3.30.2170.10:FF:000001">
    <property type="entry name" value="Endonuclease V"/>
    <property type="match status" value="1"/>
</dbReference>
<dbReference type="Gene3D" id="3.30.2170.10">
    <property type="entry name" value="archaeoglobus fulgidus dsm 4304 superfamily"/>
    <property type="match status" value="1"/>
</dbReference>
<dbReference type="HAMAP" id="MF_00801">
    <property type="entry name" value="Endonuclease_5"/>
    <property type="match status" value="1"/>
</dbReference>
<dbReference type="InterPro" id="IPR007581">
    <property type="entry name" value="Endonuclease-V"/>
</dbReference>
<dbReference type="NCBIfam" id="NF008629">
    <property type="entry name" value="PRK11617.1"/>
    <property type="match status" value="1"/>
</dbReference>
<dbReference type="PANTHER" id="PTHR28511">
    <property type="entry name" value="ENDONUCLEASE V"/>
    <property type="match status" value="1"/>
</dbReference>
<dbReference type="PANTHER" id="PTHR28511:SF1">
    <property type="entry name" value="ENDONUCLEASE V"/>
    <property type="match status" value="1"/>
</dbReference>
<dbReference type="Pfam" id="PF04493">
    <property type="entry name" value="Endonuclease_5"/>
    <property type="match status" value="1"/>
</dbReference>
<keyword id="KW-0963">Cytoplasm</keyword>
<keyword id="KW-0227">DNA damage</keyword>
<keyword id="KW-0234">DNA repair</keyword>
<keyword id="KW-0255">Endonuclease</keyword>
<keyword id="KW-0378">Hydrolase</keyword>
<keyword id="KW-0460">Magnesium</keyword>
<keyword id="KW-0479">Metal-binding</keyword>
<keyword id="KW-0540">Nuclease</keyword>
<keyword id="KW-1185">Reference proteome</keyword>
<sequence>MDLASLRAQQIELASSVIREDRLDKDPPDLIAGADVGFEQGGEVTRAAMVLLKYPSLELVEYKVARIATTMPYIPGFLSFREYPALLAAWEMLSQKPDLVFVDGHGISHPRRLGVASHFGLLVDVPTIGVAKKRLCGKFEPLSSEPGALAPLMDKGEQLAWVWRSKARCNPLFIATGHRVSVDSALAWVQRCMKGYRLPEPTRWADAVASERPAFVRYTANQP</sequence>
<reference key="1">
    <citation type="journal article" date="2007" name="J. Bacteriol.">
        <title>The genome sequence of avian pathogenic Escherichia coli strain O1:K1:H7 shares strong similarities with human extraintestinal pathogenic E. coli genomes.</title>
        <authorList>
            <person name="Johnson T.J."/>
            <person name="Kariyawasam S."/>
            <person name="Wannemuehler Y."/>
            <person name="Mangiamele P."/>
            <person name="Johnson S.J."/>
            <person name="Doetkott C."/>
            <person name="Skyberg J.A."/>
            <person name="Lynne A.M."/>
            <person name="Johnson J.R."/>
            <person name="Nolan L.K."/>
        </authorList>
    </citation>
    <scope>NUCLEOTIDE SEQUENCE [LARGE SCALE GENOMIC DNA]</scope>
</reference>
<accession>A1AIG9</accession>
<feature type="chain" id="PRO_1000046994" description="Endonuclease V">
    <location>
        <begin position="1"/>
        <end position="223"/>
    </location>
</feature>
<feature type="binding site" evidence="1">
    <location>
        <position position="35"/>
    </location>
    <ligand>
        <name>Mg(2+)</name>
        <dbReference type="ChEBI" id="CHEBI:18420"/>
    </ligand>
</feature>
<feature type="binding site" evidence="1">
    <location>
        <position position="103"/>
    </location>
    <ligand>
        <name>Mg(2+)</name>
        <dbReference type="ChEBI" id="CHEBI:18420"/>
    </ligand>
</feature>
<feature type="site" description="Interaction with target DNA" evidence="1">
    <location>
        <position position="73"/>
    </location>
</feature>
<proteinExistence type="inferred from homology"/>
<evidence type="ECO:0000255" key="1">
    <source>
        <dbReference type="HAMAP-Rule" id="MF_00801"/>
    </source>
</evidence>
<name>NFI_ECOK1</name>
<organism>
    <name type="scientific">Escherichia coli O1:K1 / APEC</name>
    <dbReference type="NCBI Taxonomy" id="405955"/>
    <lineage>
        <taxon>Bacteria</taxon>
        <taxon>Pseudomonadati</taxon>
        <taxon>Pseudomonadota</taxon>
        <taxon>Gammaproteobacteria</taxon>
        <taxon>Enterobacterales</taxon>
        <taxon>Enterobacteriaceae</taxon>
        <taxon>Escherichia</taxon>
    </lineage>
</organism>
<protein>
    <recommendedName>
        <fullName evidence="1">Endonuclease V</fullName>
        <ecNumber evidence="1">3.1.21.7</ecNumber>
    </recommendedName>
    <alternativeName>
        <fullName evidence="1">Deoxyinosine 3'endonuclease</fullName>
    </alternativeName>
    <alternativeName>
        <fullName evidence="1">Deoxyribonuclease V</fullName>
        <shortName evidence="1">DNase V</shortName>
    </alternativeName>
</protein>
<gene>
    <name evidence="1" type="primary">nfi</name>
    <name type="ordered locus">Ecok1_39650</name>
    <name type="ORF">APECO1_2477</name>
</gene>
<comment type="function">
    <text evidence="1">DNA repair enzyme involved in the repair of deaminated bases. Selectively cleaves double-stranded DNA at the second phosphodiester bond 3' to a deoxyinosine leaving behind the intact lesion on the nicked DNA.</text>
</comment>
<comment type="catalytic activity">
    <reaction evidence="1">
        <text>Endonucleolytic cleavage at apurinic or apyrimidinic sites to products with a 5'-phosphate.</text>
        <dbReference type="EC" id="3.1.21.7"/>
    </reaction>
</comment>
<comment type="cofactor">
    <cofactor evidence="1">
        <name>Mg(2+)</name>
        <dbReference type="ChEBI" id="CHEBI:18420"/>
    </cofactor>
</comment>
<comment type="subcellular location">
    <subcellularLocation>
        <location evidence="1">Cytoplasm</location>
    </subcellularLocation>
</comment>
<comment type="similarity">
    <text evidence="1">Belongs to the endonuclease V family.</text>
</comment>